<gene>
    <name evidence="1" type="primary">lnt</name>
    <name type="ordered locus">PMT_0343</name>
</gene>
<organism>
    <name type="scientific">Prochlorococcus marinus (strain MIT 9313)</name>
    <dbReference type="NCBI Taxonomy" id="74547"/>
    <lineage>
        <taxon>Bacteria</taxon>
        <taxon>Bacillati</taxon>
        <taxon>Cyanobacteriota</taxon>
        <taxon>Cyanophyceae</taxon>
        <taxon>Synechococcales</taxon>
        <taxon>Prochlorococcaceae</taxon>
        <taxon>Prochlorococcus</taxon>
    </lineage>
</organism>
<accession>Q7V8K1</accession>
<protein>
    <recommendedName>
        <fullName evidence="1">Apolipoprotein N-acyltransferase</fullName>
        <shortName evidence="1">ALP N-acyltransferase</shortName>
        <ecNumber evidence="1">2.3.1.269</ecNumber>
    </recommendedName>
</protein>
<proteinExistence type="inferred from homology"/>
<keyword id="KW-0012">Acyltransferase</keyword>
<keyword id="KW-0997">Cell inner membrane</keyword>
<keyword id="KW-1003">Cell membrane</keyword>
<keyword id="KW-0472">Membrane</keyword>
<keyword id="KW-1185">Reference proteome</keyword>
<keyword id="KW-0808">Transferase</keyword>
<keyword id="KW-0812">Transmembrane</keyword>
<keyword id="KW-1133">Transmembrane helix</keyword>
<comment type="function">
    <text evidence="1">Catalyzes the phospholipid dependent N-acylation of the N-terminal cysteine of apolipoprotein, the last step in lipoprotein maturation.</text>
</comment>
<comment type="catalytic activity">
    <reaction evidence="1">
        <text>N-terminal S-1,2-diacyl-sn-glyceryl-L-cysteinyl-[lipoprotein] + a glycerophospholipid = N-acyl-S-1,2-diacyl-sn-glyceryl-L-cysteinyl-[lipoprotein] + a 2-acyl-sn-glycero-3-phospholipid + H(+)</text>
        <dbReference type="Rhea" id="RHEA:48228"/>
        <dbReference type="Rhea" id="RHEA-COMP:14681"/>
        <dbReference type="Rhea" id="RHEA-COMP:14684"/>
        <dbReference type="ChEBI" id="CHEBI:15378"/>
        <dbReference type="ChEBI" id="CHEBI:136912"/>
        <dbReference type="ChEBI" id="CHEBI:140656"/>
        <dbReference type="ChEBI" id="CHEBI:140657"/>
        <dbReference type="ChEBI" id="CHEBI:140660"/>
        <dbReference type="EC" id="2.3.1.269"/>
    </reaction>
</comment>
<comment type="pathway">
    <text evidence="1">Protein modification; lipoprotein biosynthesis (N-acyl transfer).</text>
</comment>
<comment type="subcellular location">
    <subcellularLocation>
        <location evidence="1">Cell inner membrane</location>
        <topology evidence="1">Multi-pass membrane protein</topology>
    </subcellularLocation>
</comment>
<comment type="similarity">
    <text evidence="1">Belongs to the CN hydrolase family. Apolipoprotein N-acyltransferase subfamily.</text>
</comment>
<name>LNT_PROMM</name>
<reference key="1">
    <citation type="journal article" date="2003" name="Nature">
        <title>Genome divergence in two Prochlorococcus ecotypes reflects oceanic niche differentiation.</title>
        <authorList>
            <person name="Rocap G."/>
            <person name="Larimer F.W."/>
            <person name="Lamerdin J.E."/>
            <person name="Malfatti S."/>
            <person name="Chain P."/>
            <person name="Ahlgren N.A."/>
            <person name="Arellano A."/>
            <person name="Coleman M."/>
            <person name="Hauser L."/>
            <person name="Hess W.R."/>
            <person name="Johnson Z.I."/>
            <person name="Land M.L."/>
            <person name="Lindell D."/>
            <person name="Post A.F."/>
            <person name="Regala W."/>
            <person name="Shah M."/>
            <person name="Shaw S.L."/>
            <person name="Steglich C."/>
            <person name="Sullivan M.B."/>
            <person name="Ting C.S."/>
            <person name="Tolonen A."/>
            <person name="Webb E.A."/>
            <person name="Zinser E.R."/>
            <person name="Chisholm S.W."/>
        </authorList>
    </citation>
    <scope>NUCLEOTIDE SEQUENCE [LARGE SCALE GENOMIC DNA]</scope>
    <source>
        <strain>MIT 9313</strain>
    </source>
</reference>
<sequence>MGNDRSLALVQGAVGGVLAGIGIAHGGLLWMAPALALLWSACRFPVAASLWGFVAVLLSHRWLLALHPLTWVGVPAPLSVPVAASIWLFCGAAAAVLVGLWAWLGTSIAHLATREAGIRAQLSHALLMASIWGLAEVLLAGSPLFWIGVGGSLLPGDRALAGLARWFGAGGLATLQLLIGWWLWRTALAWRRGVGWRRSLLVGLLCLLLAHGFGWSLLRSSDATAPISVAAWQPAIPTRSKFSEEQQRRLPEALQNALDRADDLDAAWLVAPEGLLPPDAVLLRPAPLPLLSGGFRWLRGQQRSALLVVDRGERQASAFIDKHRLVPLGEWLPALPGGVFRGLSAVGGLQPGAASRLLQWPGPTAAVAICYELSNGAALAQAVADGAQWLLAVANLDPYPLALQRQFIALAQLRSIETARDLLSVANTGPSALVLATGKQQQLLAPFTEGVGLADLHFHQGISGYTRWREAPLIGLMLFAVVGLGLSRVRSWLISLMLC</sequence>
<dbReference type="EC" id="2.3.1.269" evidence="1"/>
<dbReference type="EMBL" id="BX548175">
    <property type="protein sequence ID" value="CAE20518.1"/>
    <property type="molecule type" value="Genomic_DNA"/>
</dbReference>
<dbReference type="RefSeq" id="WP_011129722.1">
    <property type="nucleotide sequence ID" value="NC_005071.1"/>
</dbReference>
<dbReference type="SMR" id="Q7V8K1"/>
<dbReference type="KEGG" id="pmt:PMT_0343"/>
<dbReference type="eggNOG" id="COG0815">
    <property type="taxonomic scope" value="Bacteria"/>
</dbReference>
<dbReference type="HOGENOM" id="CLU_019563_1_0_3"/>
<dbReference type="OrthoDB" id="9804277at2"/>
<dbReference type="UniPathway" id="UPA00666"/>
<dbReference type="Proteomes" id="UP000001423">
    <property type="component" value="Chromosome"/>
</dbReference>
<dbReference type="GO" id="GO:0005886">
    <property type="term" value="C:plasma membrane"/>
    <property type="evidence" value="ECO:0007669"/>
    <property type="project" value="UniProtKB-SubCell"/>
</dbReference>
<dbReference type="GO" id="GO:0016410">
    <property type="term" value="F:N-acyltransferase activity"/>
    <property type="evidence" value="ECO:0007669"/>
    <property type="project" value="UniProtKB-UniRule"/>
</dbReference>
<dbReference type="GO" id="GO:0042158">
    <property type="term" value="P:lipoprotein biosynthetic process"/>
    <property type="evidence" value="ECO:0007669"/>
    <property type="project" value="UniProtKB-UniRule"/>
</dbReference>
<dbReference type="CDD" id="cd07571">
    <property type="entry name" value="ALP_N-acyl_transferase"/>
    <property type="match status" value="1"/>
</dbReference>
<dbReference type="Gene3D" id="3.60.110.10">
    <property type="entry name" value="Carbon-nitrogen hydrolase"/>
    <property type="match status" value="1"/>
</dbReference>
<dbReference type="HAMAP" id="MF_01148">
    <property type="entry name" value="Lnt"/>
    <property type="match status" value="1"/>
</dbReference>
<dbReference type="InterPro" id="IPR004563">
    <property type="entry name" value="Apolipo_AcylTrfase"/>
</dbReference>
<dbReference type="InterPro" id="IPR003010">
    <property type="entry name" value="C-N_Hydrolase"/>
</dbReference>
<dbReference type="InterPro" id="IPR036526">
    <property type="entry name" value="C-N_Hydrolase_sf"/>
</dbReference>
<dbReference type="PANTHER" id="PTHR38686">
    <property type="entry name" value="APOLIPOPROTEIN N-ACYLTRANSFERASE"/>
    <property type="match status" value="1"/>
</dbReference>
<dbReference type="PANTHER" id="PTHR38686:SF1">
    <property type="entry name" value="APOLIPOPROTEIN N-ACYLTRANSFERASE"/>
    <property type="match status" value="1"/>
</dbReference>
<dbReference type="SUPFAM" id="SSF56317">
    <property type="entry name" value="Carbon-nitrogen hydrolase"/>
    <property type="match status" value="1"/>
</dbReference>
<dbReference type="PROSITE" id="PS50263">
    <property type="entry name" value="CN_HYDROLASE"/>
    <property type="match status" value="1"/>
</dbReference>
<feature type="chain" id="PRO_0000178082" description="Apolipoprotein N-acyltransferase">
    <location>
        <begin position="1"/>
        <end position="499"/>
    </location>
</feature>
<feature type="transmembrane region" description="Helical" evidence="1">
    <location>
        <begin position="17"/>
        <end position="37"/>
    </location>
</feature>
<feature type="transmembrane region" description="Helical" evidence="1">
    <location>
        <begin position="38"/>
        <end position="58"/>
    </location>
</feature>
<feature type="transmembrane region" description="Helical" evidence="1">
    <location>
        <begin position="84"/>
        <end position="104"/>
    </location>
</feature>
<feature type="transmembrane region" description="Helical" evidence="1">
    <location>
        <begin position="131"/>
        <end position="151"/>
    </location>
</feature>
<feature type="transmembrane region" description="Helical" evidence="1">
    <location>
        <begin position="163"/>
        <end position="183"/>
    </location>
</feature>
<feature type="transmembrane region" description="Helical" evidence="1">
    <location>
        <begin position="198"/>
        <end position="218"/>
    </location>
</feature>
<feature type="transmembrane region" description="Helical" evidence="1">
    <location>
        <begin position="474"/>
        <end position="494"/>
    </location>
</feature>
<feature type="domain" description="CN hydrolase" evidence="1">
    <location>
        <begin position="232"/>
        <end position="458"/>
    </location>
</feature>
<feature type="active site" description="Proton acceptor" evidence="1">
    <location>
        <position position="273"/>
    </location>
</feature>
<feature type="active site" evidence="1">
    <location>
        <position position="322"/>
    </location>
</feature>
<feature type="active site" description="Nucleophile" evidence="1">
    <location>
        <position position="370"/>
    </location>
</feature>
<evidence type="ECO:0000255" key="1">
    <source>
        <dbReference type="HAMAP-Rule" id="MF_01148"/>
    </source>
</evidence>